<keyword id="KW-0067">ATP-binding</keyword>
<keyword id="KW-0963">Cytoplasm</keyword>
<keyword id="KW-0275">Fatty acid biosynthesis</keyword>
<keyword id="KW-0276">Fatty acid metabolism</keyword>
<keyword id="KW-0444">Lipid biosynthesis</keyword>
<keyword id="KW-0443">Lipid metabolism</keyword>
<keyword id="KW-0547">Nucleotide-binding</keyword>
<keyword id="KW-1185">Reference proteome</keyword>
<keyword id="KW-0808">Transferase</keyword>
<accession>B5Z6S9</accession>
<evidence type="ECO:0000255" key="1">
    <source>
        <dbReference type="HAMAP-Rule" id="MF_00823"/>
    </source>
</evidence>
<evidence type="ECO:0000255" key="2">
    <source>
        <dbReference type="PROSITE-ProRule" id="PRU01137"/>
    </source>
</evidence>
<dbReference type="EC" id="2.1.3.15" evidence="1"/>
<dbReference type="EMBL" id="CP001173">
    <property type="protein sequence ID" value="ACI27278.1"/>
    <property type="molecule type" value="Genomic_DNA"/>
</dbReference>
<dbReference type="RefSeq" id="WP_001029377.1">
    <property type="nucleotide sequence ID" value="NC_011333.1"/>
</dbReference>
<dbReference type="SMR" id="B5Z6S9"/>
<dbReference type="KEGG" id="hpg:HPG27_517"/>
<dbReference type="HOGENOM" id="CLU_015486_0_2_7"/>
<dbReference type="UniPathway" id="UPA00655">
    <property type="reaction ID" value="UER00711"/>
</dbReference>
<dbReference type="Proteomes" id="UP000001735">
    <property type="component" value="Chromosome"/>
</dbReference>
<dbReference type="GO" id="GO:0009317">
    <property type="term" value="C:acetyl-CoA carboxylase complex"/>
    <property type="evidence" value="ECO:0007669"/>
    <property type="project" value="InterPro"/>
</dbReference>
<dbReference type="GO" id="GO:0003989">
    <property type="term" value="F:acetyl-CoA carboxylase activity"/>
    <property type="evidence" value="ECO:0007669"/>
    <property type="project" value="InterPro"/>
</dbReference>
<dbReference type="GO" id="GO:0005524">
    <property type="term" value="F:ATP binding"/>
    <property type="evidence" value="ECO:0007669"/>
    <property type="project" value="UniProtKB-KW"/>
</dbReference>
<dbReference type="GO" id="GO:0016743">
    <property type="term" value="F:carboxyl- or carbamoyltransferase activity"/>
    <property type="evidence" value="ECO:0007669"/>
    <property type="project" value="UniProtKB-UniRule"/>
</dbReference>
<dbReference type="GO" id="GO:0006633">
    <property type="term" value="P:fatty acid biosynthetic process"/>
    <property type="evidence" value="ECO:0007669"/>
    <property type="project" value="UniProtKB-KW"/>
</dbReference>
<dbReference type="GO" id="GO:2001295">
    <property type="term" value="P:malonyl-CoA biosynthetic process"/>
    <property type="evidence" value="ECO:0007669"/>
    <property type="project" value="UniProtKB-UniRule"/>
</dbReference>
<dbReference type="Gene3D" id="3.90.226.10">
    <property type="entry name" value="2-enoyl-CoA Hydratase, Chain A, domain 1"/>
    <property type="match status" value="1"/>
</dbReference>
<dbReference type="HAMAP" id="MF_00823">
    <property type="entry name" value="AcetylCoA_CT_alpha"/>
    <property type="match status" value="1"/>
</dbReference>
<dbReference type="InterPro" id="IPR001095">
    <property type="entry name" value="Acetyl_CoA_COase_a_su"/>
</dbReference>
<dbReference type="InterPro" id="IPR029045">
    <property type="entry name" value="ClpP/crotonase-like_dom_sf"/>
</dbReference>
<dbReference type="InterPro" id="IPR011763">
    <property type="entry name" value="COA_CT_C"/>
</dbReference>
<dbReference type="NCBIfam" id="TIGR00513">
    <property type="entry name" value="accA"/>
    <property type="match status" value="1"/>
</dbReference>
<dbReference type="NCBIfam" id="NF041504">
    <property type="entry name" value="AccA_sub"/>
    <property type="match status" value="1"/>
</dbReference>
<dbReference type="NCBIfam" id="NF004344">
    <property type="entry name" value="PRK05724.1"/>
    <property type="match status" value="1"/>
</dbReference>
<dbReference type="PANTHER" id="PTHR42853">
    <property type="entry name" value="ACETYL-COENZYME A CARBOXYLASE CARBOXYL TRANSFERASE SUBUNIT ALPHA"/>
    <property type="match status" value="1"/>
</dbReference>
<dbReference type="PANTHER" id="PTHR42853:SF3">
    <property type="entry name" value="ACETYL-COENZYME A CARBOXYLASE CARBOXYL TRANSFERASE SUBUNIT ALPHA, CHLOROPLASTIC"/>
    <property type="match status" value="1"/>
</dbReference>
<dbReference type="Pfam" id="PF03255">
    <property type="entry name" value="ACCA"/>
    <property type="match status" value="1"/>
</dbReference>
<dbReference type="PRINTS" id="PR01069">
    <property type="entry name" value="ACCCTRFRASEA"/>
</dbReference>
<dbReference type="SUPFAM" id="SSF52096">
    <property type="entry name" value="ClpP/crotonase"/>
    <property type="match status" value="1"/>
</dbReference>
<dbReference type="PROSITE" id="PS50989">
    <property type="entry name" value="COA_CT_CTER"/>
    <property type="match status" value="1"/>
</dbReference>
<proteinExistence type="inferred from homology"/>
<sequence length="312" mass="34923">MAIYLDFENHIKEIQNEIELALIRGDEDAKEILEKRLDKEVKSIYSNLTDFQKLQLARHPDRPYAMDYIDLILKDKYEVFGDRHYNDDKAIVCFIGKIDNIPVVVIGEEKGRGTKNKLLRNFGMPNPCGYRKALKMAKFAEKFNLPILMLVDTAGAYPGIGAEERGQSEAIAKNLQEFASLKVPTISVIIGEGGSGGALAIAVADKLAMMEYSIFSVISPEGCAAILWDDPSKTEVAIKAMKITPRDLKEAGLIDDIILEPSKGAHRDKFSAANTIKEYFLDALRTIQQDPHFLDNRYQKLMSLGSFVESMN</sequence>
<protein>
    <recommendedName>
        <fullName evidence="1">Acetyl-coenzyme A carboxylase carboxyl transferase subunit alpha</fullName>
        <shortName evidence="1">ACCase subunit alpha</shortName>
        <shortName evidence="1">Acetyl-CoA carboxylase carboxyltransferase subunit alpha</shortName>
        <ecNumber evidence="1">2.1.3.15</ecNumber>
    </recommendedName>
</protein>
<gene>
    <name evidence="1" type="primary">accA</name>
    <name type="ordered locus">HPG27_517</name>
</gene>
<reference key="1">
    <citation type="journal article" date="2009" name="J. Bacteriol.">
        <title>The complete genome sequence of Helicobacter pylori strain G27.</title>
        <authorList>
            <person name="Baltrus D.A."/>
            <person name="Amieva M.R."/>
            <person name="Covacci A."/>
            <person name="Lowe T.M."/>
            <person name="Merrell D.S."/>
            <person name="Ottemann K.M."/>
            <person name="Stein M."/>
            <person name="Salama N.R."/>
            <person name="Guillemin K."/>
        </authorList>
    </citation>
    <scope>NUCLEOTIDE SEQUENCE [LARGE SCALE GENOMIC DNA]</scope>
    <source>
        <strain>G27</strain>
    </source>
</reference>
<feature type="chain" id="PRO_1000134496" description="Acetyl-coenzyme A carboxylase carboxyl transferase subunit alpha">
    <location>
        <begin position="1"/>
        <end position="312"/>
    </location>
</feature>
<feature type="domain" description="CoA carboxyltransferase C-terminal" evidence="2">
    <location>
        <begin position="36"/>
        <end position="286"/>
    </location>
</feature>
<organism>
    <name type="scientific">Helicobacter pylori (strain G27)</name>
    <dbReference type="NCBI Taxonomy" id="563041"/>
    <lineage>
        <taxon>Bacteria</taxon>
        <taxon>Pseudomonadati</taxon>
        <taxon>Campylobacterota</taxon>
        <taxon>Epsilonproteobacteria</taxon>
        <taxon>Campylobacterales</taxon>
        <taxon>Helicobacteraceae</taxon>
        <taxon>Helicobacter</taxon>
    </lineage>
</organism>
<comment type="function">
    <text evidence="1">Component of the acetyl coenzyme A carboxylase (ACC) complex. First, biotin carboxylase catalyzes the carboxylation of biotin on its carrier protein (BCCP) and then the CO(2) group is transferred by the carboxyltransferase to acetyl-CoA to form malonyl-CoA.</text>
</comment>
<comment type="catalytic activity">
    <reaction evidence="1">
        <text>N(6)-carboxybiotinyl-L-lysyl-[protein] + acetyl-CoA = N(6)-biotinyl-L-lysyl-[protein] + malonyl-CoA</text>
        <dbReference type="Rhea" id="RHEA:54728"/>
        <dbReference type="Rhea" id="RHEA-COMP:10505"/>
        <dbReference type="Rhea" id="RHEA-COMP:10506"/>
        <dbReference type="ChEBI" id="CHEBI:57288"/>
        <dbReference type="ChEBI" id="CHEBI:57384"/>
        <dbReference type="ChEBI" id="CHEBI:83144"/>
        <dbReference type="ChEBI" id="CHEBI:83145"/>
        <dbReference type="EC" id="2.1.3.15"/>
    </reaction>
</comment>
<comment type="pathway">
    <text evidence="1">Lipid metabolism; malonyl-CoA biosynthesis; malonyl-CoA from acetyl-CoA: step 1/1.</text>
</comment>
<comment type="subunit">
    <text evidence="1">Acetyl-CoA carboxylase is a heterohexamer composed of biotin carboxyl carrier protein (AccB), biotin carboxylase (AccC) and two subunits each of ACCase subunit alpha (AccA) and ACCase subunit beta (AccD).</text>
</comment>
<comment type="subcellular location">
    <subcellularLocation>
        <location evidence="1">Cytoplasm</location>
    </subcellularLocation>
</comment>
<comment type="similarity">
    <text evidence="1">Belongs to the AccA family.</text>
</comment>
<name>ACCA_HELPG</name>